<gene>
    <name type="ORF">ORF2</name>
</gene>
<organismHost>
    <name type="scientific">Bandicota bengalensis</name>
    <name type="common">lesser bandicoot rat</name>
    <dbReference type="NCBI Taxonomy" id="69079"/>
</organismHost>
<organismHost>
    <name type="scientific">Callithrix</name>
    <dbReference type="NCBI Taxonomy" id="9481"/>
</organismHost>
<organismHost>
    <name type="scientific">Cercopithecus hamlyni</name>
    <name type="common">Owl-faced monkey</name>
    <name type="synonym">Hamlyn's monkey</name>
    <dbReference type="NCBI Taxonomy" id="9536"/>
</organismHost>
<organismHost>
    <name type="scientific">Chlorocebus aethiops</name>
    <name type="common">Green monkey</name>
    <name type="synonym">Cercopithecus aethiops</name>
    <dbReference type="NCBI Taxonomy" id="9534"/>
</organismHost>
<organismHost>
    <name type="scientific">Gallus gallus</name>
    <name type="common">Chicken</name>
    <dbReference type="NCBI Taxonomy" id="9031"/>
</organismHost>
<organismHost>
    <name type="scientific">Homo sapiens</name>
    <name type="common">Human</name>
    <dbReference type="NCBI Taxonomy" id="9606"/>
</organismHost>
<organismHost>
    <name type="scientific">Macaca</name>
    <name type="common">macaques</name>
    <dbReference type="NCBI Taxonomy" id="9539"/>
</organismHost>
<organismHost>
    <name type="scientific">Mus musculus</name>
    <name type="common">Mouse</name>
    <dbReference type="NCBI Taxonomy" id="10090"/>
</organismHost>
<organismHost>
    <name type="scientific">Pan troglodytes</name>
    <name type="common">Chimpanzee</name>
    <dbReference type="NCBI Taxonomy" id="9598"/>
</organismHost>
<organismHost>
    <name type="scientific">Saimiri</name>
    <name type="common">squirrel monkeys</name>
    <dbReference type="NCBI Taxonomy" id="9520"/>
</organismHost>
<organismHost>
    <name type="scientific">Sus scrofa</name>
    <name type="common">Pig</name>
    <dbReference type="NCBI Taxonomy" id="9823"/>
</organismHost>
<feature type="signal peptide" evidence="6">
    <location>
        <begin position="1"/>
        <end position="23"/>
    </location>
</feature>
<feature type="chain" id="PRO_0000036996" description="Pro-secreted protein ORF2">
    <location>
        <begin position="24"/>
        <end position="659"/>
    </location>
</feature>
<feature type="chain" id="PRO_0000456933" description="Secreted protein ORF2" evidence="2">
    <location>
        <begin position="34"/>
        <end position="659"/>
    </location>
</feature>
<feature type="region of interest" description="Disordered" evidence="7">
    <location>
        <begin position="19"/>
        <end position="43"/>
    </location>
</feature>
<feature type="region of interest" description="Disordered" evidence="7">
    <location>
        <begin position="64"/>
        <end position="107"/>
    </location>
</feature>
<feature type="region of interest" description="particle formation" evidence="1">
    <location>
        <begin position="367"/>
        <end position="393"/>
    </location>
</feature>
<feature type="region of interest" description="Oligomerization" evidence="1">
    <location>
        <begin position="584"/>
        <end position="609"/>
    </location>
</feature>
<feature type="short sequence motif" description="Nuclear localization signal" evidence="2">
    <location>
        <begin position="28"/>
        <end position="33"/>
    </location>
</feature>
<feature type="compositionally biased region" description="Low complexity" evidence="7">
    <location>
        <begin position="92"/>
        <end position="107"/>
    </location>
</feature>
<feature type="site" description="Possible cleavage" evidence="2">
    <location>
        <begin position="33"/>
        <end position="34"/>
    </location>
</feature>
<feature type="site" description="Possible cleavage" evidence="4">
    <location>
        <begin position="577"/>
        <end position="578"/>
    </location>
</feature>
<feature type="site" description="Cleavage" evidence="4">
    <location>
        <begin position="600"/>
        <end position="601"/>
    </location>
</feature>
<feature type="glycosylation site" description="N-linked (GlcNAc...) asparagine; by host" evidence="3">
    <location>
        <position position="137"/>
    </location>
</feature>
<feature type="glycosylation site" description="N-linked (GlcNAc...) asparagine; by host" evidence="3">
    <location>
        <position position="310"/>
    </location>
</feature>
<feature type="glycosylation site" description="N-linked (GlcNAc...) asparagine; by host" evidence="3">
    <location>
        <position position="561"/>
    </location>
</feature>
<feature type="splice variant" id="VSP_061725" description="In isoform Capsid protein.">
    <location>
        <begin position="1"/>
        <end position="15"/>
    </location>
</feature>
<name>CAPSD_HEVME</name>
<accession>Q03500</accession>
<proteinExistence type="inferred from homology"/>
<keyword id="KW-0024">Alternative initiation</keyword>
<keyword id="KW-0167">Capsid protein</keyword>
<keyword id="KW-0325">Glycoprotein</keyword>
<keyword id="KW-1035">Host cytoplasm</keyword>
<keyword id="KW-1038">Host endoplasmic reticulum</keyword>
<keyword id="KW-1040">Host Golgi apparatus</keyword>
<keyword id="KW-1048">Host nucleus</keyword>
<keyword id="KW-0694">RNA-binding</keyword>
<keyword id="KW-0964">Secreted</keyword>
<keyword id="KW-0732">Signal</keyword>
<keyword id="KW-1140">T=1 icosahedral capsid protein</keyword>
<keyword id="KW-0946">Virion</keyword>
<reference key="1">
    <citation type="journal article" date="1992" name="Virology">
        <title>Molecular cloning and sequencing of the Mexico isolate of hepatitis E virus (HEV).</title>
        <authorList>
            <person name="Huang C.C."/>
            <person name="Nguyen D."/>
            <person name="Fernandez J."/>
            <person name="Yun K.Y."/>
            <person name="Fry K.E."/>
            <person name="Bradley D.W."/>
            <person name="Tam A.W."/>
            <person name="Reyes G.R."/>
        </authorList>
    </citation>
    <scope>NUCLEOTIDE SEQUENCE [GENOMIC RNA]</scope>
</reference>
<sequence>MRPRPLLLLFLLFLPMLPAPPTGQPSGRRRGRRSGGTGGGFWGDRVDSQPFAIPYIHPTNPFAPDVAAASGSGPRLRQPARPLGSTWRDQAQRPSAASRRRPATAGAAALTAVAPAHDTSPVPDVDSRGAILRRQYNLSTSPLTSSVASGTNLVLYAAPLNPPLPLQDGTNTHIMATEASNYAQYRVARATIRYRPLVPNAVGGYAISISFWPQTTTTPTSVDMNSITSTDVRILVQPGIASELVIPSERLHYRNQGWRSVETSGVAEEEATSGLVMLCIHGSPVNSYTNTPYTGALGLLDFALELEFRNLTTCNTNTRVSRYSSTARHSARGADGTAELTTTAATRFMKDLHFTGLNGVGEVGRGIALTLLNLADTLLGGLPTELISSAGGQLFYSRPVVSANGEPTVKLYTSVENAQQDKGVAIPHDIDLGDSRVVIQDYDNQHEQDRPTPSPAPSRPFSVLRANDVLWLSLTAAEYDQSTYGSSTGPVYISDSVTLVNVATGAQAVARSLDWSKVTLDGRPLPTVEQYSKTFFVLPLRGKLSFWEAGTTKAGYPYNYNTTASDQILIENAAGHRVAISTYTTRLGAGPVAISAAAVLAPRSALALLEDTFDYPGRAHTFDDFCPECRALGLQGCAFQSTVAELQRLKVKVGKTREL</sequence>
<dbReference type="EMBL" id="M74506">
    <property type="protein sequence ID" value="AAA45732.1"/>
    <property type="molecule type" value="Genomic_RNA"/>
</dbReference>
<dbReference type="PIR" id="B44212">
    <property type="entry name" value="B44212"/>
</dbReference>
<dbReference type="SMR" id="Q03500"/>
<dbReference type="Proteomes" id="UP000007245">
    <property type="component" value="Segment"/>
</dbReference>
<dbReference type="GO" id="GO:0005576">
    <property type="term" value="C:extracellular region"/>
    <property type="evidence" value="ECO:0007669"/>
    <property type="project" value="UniProtKB-SubCell"/>
</dbReference>
<dbReference type="GO" id="GO:0044165">
    <property type="term" value="C:host cell endoplasmic reticulum"/>
    <property type="evidence" value="ECO:0007669"/>
    <property type="project" value="UniProtKB-SubCell"/>
</dbReference>
<dbReference type="GO" id="GO:0044177">
    <property type="term" value="C:host cell Golgi apparatus"/>
    <property type="evidence" value="ECO:0007669"/>
    <property type="project" value="UniProtKB-SubCell"/>
</dbReference>
<dbReference type="GO" id="GO:0042025">
    <property type="term" value="C:host cell nucleus"/>
    <property type="evidence" value="ECO:0007669"/>
    <property type="project" value="UniProtKB-SubCell"/>
</dbReference>
<dbReference type="GO" id="GO:0044228">
    <property type="term" value="C:host cell surface"/>
    <property type="evidence" value="ECO:0007669"/>
    <property type="project" value="UniProtKB-SubCell"/>
</dbReference>
<dbReference type="GO" id="GO:0039615">
    <property type="term" value="C:T=1 icosahedral viral capsid"/>
    <property type="evidence" value="ECO:0007669"/>
    <property type="project" value="UniProtKB-KW"/>
</dbReference>
<dbReference type="GO" id="GO:0003723">
    <property type="term" value="F:RNA binding"/>
    <property type="evidence" value="ECO:0007669"/>
    <property type="project" value="UniProtKB-KW"/>
</dbReference>
<dbReference type="GO" id="GO:0005198">
    <property type="term" value="F:structural molecule activity"/>
    <property type="evidence" value="ECO:0007669"/>
    <property type="project" value="InterPro"/>
</dbReference>
<dbReference type="FunFam" id="2.60.120.20:FF:000010">
    <property type="entry name" value="Secreted protein ORF2"/>
    <property type="match status" value="1"/>
</dbReference>
<dbReference type="Gene3D" id="2.40.30.190">
    <property type="match status" value="1"/>
</dbReference>
<dbReference type="Gene3D" id="2.60.120.20">
    <property type="match status" value="1"/>
</dbReference>
<dbReference type="InterPro" id="IPR048794">
    <property type="entry name" value="SP2_C"/>
</dbReference>
<dbReference type="InterPro" id="IPR048802">
    <property type="entry name" value="SP2_M"/>
</dbReference>
<dbReference type="InterPro" id="IPR004261">
    <property type="entry name" value="SP2_N"/>
</dbReference>
<dbReference type="InterPro" id="IPR029053">
    <property type="entry name" value="Viral_coat"/>
</dbReference>
<dbReference type="Pfam" id="PF03014">
    <property type="entry name" value="SP2"/>
    <property type="match status" value="1"/>
</dbReference>
<dbReference type="Pfam" id="PF20752">
    <property type="entry name" value="SP2_C"/>
    <property type="match status" value="2"/>
</dbReference>
<dbReference type="Pfam" id="PF20751">
    <property type="entry name" value="SP2_M"/>
    <property type="match status" value="1"/>
</dbReference>
<dbReference type="SUPFAM" id="SSF88633">
    <property type="entry name" value="Positive stranded ssRNA viruses"/>
    <property type="match status" value="1"/>
</dbReference>
<protein>
    <recommendedName>
        <fullName>Pro-secreted protein ORF2</fullName>
    </recommendedName>
    <alternativeName>
        <fullName>Protein ORF2</fullName>
        <shortName>pORF2</shortName>
    </alternativeName>
    <component>
        <recommendedName>
            <fullName>Secreted protein ORF2</fullName>
            <shortName>ORF2s</shortName>
        </recommendedName>
    </component>
</protein>
<comment type="function">
    <molecule>Isoform Secreted protein ORF2</molecule>
    <text evidence="5">Plays a role in the inhibition of host antibody-mediated neutralization without blocking viral cell entry.</text>
</comment>
<comment type="function">
    <molecule>Isoform Capsid protein</molecule>
    <text evidence="1 2 4">Forms an icosahedral capsid with a T=1 symmetry and a 34 nm diameter. The capsid is composed of 60 copies linked to each other. Binds to the 5' end of the genomic RNA to mediate genome encapsidation (By similarity). Binds to heparin surface proteoglycans (HSPGs) to mediate viral entry. Additionally, the interactions with host ASGR1 and ASGR2 facilitate viral infection of hepatocytes (By similarity). Inhibits IFN production by blocking host TBK1-induced IRF3 phosphorylation (By similarity). The nuclear form probably modulates host gene expression (By similarity).</text>
</comment>
<comment type="subunit">
    <molecule>Isoform Secreted protein ORF2</molecule>
    <text evidence="5">Homodimer.</text>
</comment>
<comment type="subunit">
    <molecule>Isoform Capsid protein</molecule>
    <text evidence="3 4">Self-assembles to form the capsid. The capsid is dominated by dimers that define the 30 morphological units. Interacts with phosphorylated protein ORF3 (By similarity). Interacts with host TMEM134. Interacts with host ASGR1 and ASGR2; these interactions facilitate infection of host hepatocytes (By similarity).</text>
</comment>
<comment type="subcellular location">
    <molecule>Isoform Secreted protein ORF2</molecule>
    <subcellularLocation>
        <location evidence="4">Secreted</location>
    </subcellularLocation>
    <text evidence="3">Cotranslationally translocated into the ER.</text>
</comment>
<comment type="subcellular location">
    <molecule>Isoform Capsid protein</molecule>
    <subcellularLocation>
        <location evidence="4">Virion</location>
    </subcellularLocation>
    <subcellularLocation>
        <location evidence="4">Host cytoplasm</location>
    </subcellularLocation>
    <subcellularLocation>
        <location evidence="4">Host endoplasmic reticulum</location>
    </subcellularLocation>
    <subcellularLocation>
        <location evidence="4">Host Golgi apparatus</location>
    </subcellularLocation>
    <subcellularLocation>
        <location evidence="3">Host cell surface</location>
    </subcellularLocation>
    <subcellularLocation>
        <location evidence="4">Host nucleus</location>
    </subcellularLocation>
    <text evidence="2 4 5">Translation from the internal AUG codon disrupts the signal sequence, producing a cytoplasmic protein that is responsible for virion assembly (By similarity). Shuttles between cytoplasm and nucleus (By similarity). This isoform is found in quasi-enveloped virions (By similarity).</text>
</comment>
<comment type="alternative products">
    <event type="alternative initiation"/>
    <isoform>
        <id>Q03500-1</id>
        <name>Secreted protein ORF2</name>
        <name>ORF2s</name>
        <name>ORF2g</name>
        <sequence type="displayed"/>
    </isoform>
    <isoform>
        <id>Q03500-2</id>
        <name>Capsid protein</name>
        <name>ORF2c</name>
        <name>ORF2i</name>
        <sequence type="described" ref="VSP_061725"/>
    </isoform>
</comment>
<comment type="domain">
    <text evidence="2">The Arginine-Rich Motif (ARM) acts as a nuclear localization signal that drives the nuclear translocation of isoform capsid protein. This motif has also been linked to the inhibition of host IRF3 phosphorylation.</text>
</comment>
<comment type="PTM">
    <molecule>Pro-secreted protein ORF2</molecule>
    <text evidence="2">Cleaved by host protease in the N-terminus.</text>
</comment>
<comment type="PTM">
    <molecule>Isoform Secreted protein ORF2</molecule>
    <text evidence="4">N-glycosylated.</text>
</comment>
<comment type="PTM">
    <molecule>Isoform Capsid protein</molecule>
    <text evidence="4">Not N-glycosylated. The C-terminus of the capsid protein ORF2 is truncated in non-enveloped virions shedded in feces, probably due to host proteases.</text>
</comment>
<comment type="miscellaneous">
    <text evidence="4">The viral particles present in feces and bile are non-enveloped, while those in circulating blood and culture supernatants are covered with a cellular membrane (quasi-enveloped).</text>
</comment>
<comment type="similarity">
    <text evidence="8">Belongs to the hepevirus capsid protein family.</text>
</comment>
<organism>
    <name type="scientific">Hepatitis E virus genotype 2 (isolate Human/Mexico)</name>
    <name type="common">HEV-2</name>
    <dbReference type="NCBI Taxonomy" id="31768"/>
    <lineage>
        <taxon>Viruses</taxon>
        <taxon>Riboviria</taxon>
        <taxon>Orthornavirae</taxon>
        <taxon>Kitrinoviricota</taxon>
        <taxon>Alsuviricetes</taxon>
        <taxon>Hepelivirales</taxon>
        <taxon>Hepeviridae</taxon>
        <taxon>Orthohepevirinae</taxon>
        <taxon>Paslahepevirus</taxon>
        <taxon>Hepatitis E virus</taxon>
    </lineage>
</organism>
<evidence type="ECO:0000250" key="1">
    <source>
        <dbReference type="UniProtKB" id="P29326"/>
    </source>
</evidence>
<evidence type="ECO:0000250" key="2">
    <source>
        <dbReference type="UniProtKB" id="P33426"/>
    </source>
</evidence>
<evidence type="ECO:0000250" key="3">
    <source>
        <dbReference type="UniProtKB" id="Q68985"/>
    </source>
</evidence>
<evidence type="ECO:0000250" key="4">
    <source>
        <dbReference type="UniProtKB" id="Q81871"/>
    </source>
</evidence>
<evidence type="ECO:0000250" key="5">
    <source>
        <dbReference type="UniProtKB" id="Q9YLQ9"/>
    </source>
</evidence>
<evidence type="ECO:0000255" key="6"/>
<evidence type="ECO:0000256" key="7">
    <source>
        <dbReference type="SAM" id="MobiDB-lite"/>
    </source>
</evidence>
<evidence type="ECO:0000305" key="8"/>